<keyword id="KW-0687">Ribonucleoprotein</keyword>
<keyword id="KW-0689">Ribosomal protein</keyword>
<keyword id="KW-0694">RNA-binding</keyword>
<keyword id="KW-0699">rRNA-binding</keyword>
<keyword id="KW-0820">tRNA-binding</keyword>
<evidence type="ECO:0000255" key="1">
    <source>
        <dbReference type="HAMAP-Rule" id="MF_01315"/>
    </source>
</evidence>
<evidence type="ECO:0000305" key="2"/>
<dbReference type="EMBL" id="CP000237">
    <property type="protein sequence ID" value="ABD45963.1"/>
    <property type="molecule type" value="Genomic_DNA"/>
</dbReference>
<dbReference type="RefSeq" id="WP_011451684.1">
    <property type="nucleotide sequence ID" value="NC_007798.1"/>
</dbReference>
<dbReference type="SMR" id="Q2GEB8"/>
<dbReference type="STRING" id="222891.NSE_0287"/>
<dbReference type="KEGG" id="nse:NSE_0287"/>
<dbReference type="eggNOG" id="COG0099">
    <property type="taxonomic scope" value="Bacteria"/>
</dbReference>
<dbReference type="HOGENOM" id="CLU_103849_1_2_5"/>
<dbReference type="OrthoDB" id="9803610at2"/>
<dbReference type="Proteomes" id="UP000001942">
    <property type="component" value="Chromosome"/>
</dbReference>
<dbReference type="GO" id="GO:0005829">
    <property type="term" value="C:cytosol"/>
    <property type="evidence" value="ECO:0007669"/>
    <property type="project" value="TreeGrafter"/>
</dbReference>
<dbReference type="GO" id="GO:0015935">
    <property type="term" value="C:small ribosomal subunit"/>
    <property type="evidence" value="ECO:0007669"/>
    <property type="project" value="TreeGrafter"/>
</dbReference>
<dbReference type="GO" id="GO:0019843">
    <property type="term" value="F:rRNA binding"/>
    <property type="evidence" value="ECO:0007669"/>
    <property type="project" value="UniProtKB-UniRule"/>
</dbReference>
<dbReference type="GO" id="GO:0003735">
    <property type="term" value="F:structural constituent of ribosome"/>
    <property type="evidence" value="ECO:0007669"/>
    <property type="project" value="InterPro"/>
</dbReference>
<dbReference type="GO" id="GO:0000049">
    <property type="term" value="F:tRNA binding"/>
    <property type="evidence" value="ECO:0007669"/>
    <property type="project" value="UniProtKB-UniRule"/>
</dbReference>
<dbReference type="GO" id="GO:0006412">
    <property type="term" value="P:translation"/>
    <property type="evidence" value="ECO:0007669"/>
    <property type="project" value="UniProtKB-UniRule"/>
</dbReference>
<dbReference type="FunFam" id="1.10.8.50:FF:000001">
    <property type="entry name" value="30S ribosomal protein S13"/>
    <property type="match status" value="1"/>
</dbReference>
<dbReference type="Gene3D" id="1.10.8.50">
    <property type="match status" value="1"/>
</dbReference>
<dbReference type="Gene3D" id="4.10.910.10">
    <property type="entry name" value="30s ribosomal protein s13, domain 2"/>
    <property type="match status" value="1"/>
</dbReference>
<dbReference type="HAMAP" id="MF_01315">
    <property type="entry name" value="Ribosomal_uS13"/>
    <property type="match status" value="1"/>
</dbReference>
<dbReference type="InterPro" id="IPR027437">
    <property type="entry name" value="Rbsml_uS13_C"/>
</dbReference>
<dbReference type="InterPro" id="IPR001892">
    <property type="entry name" value="Ribosomal_uS13"/>
</dbReference>
<dbReference type="InterPro" id="IPR010979">
    <property type="entry name" value="Ribosomal_uS13-like_H2TH"/>
</dbReference>
<dbReference type="InterPro" id="IPR019980">
    <property type="entry name" value="Ribosomal_uS13_bac-type"/>
</dbReference>
<dbReference type="InterPro" id="IPR018269">
    <property type="entry name" value="Ribosomal_uS13_CS"/>
</dbReference>
<dbReference type="NCBIfam" id="TIGR03631">
    <property type="entry name" value="uS13_bact"/>
    <property type="match status" value="1"/>
</dbReference>
<dbReference type="PANTHER" id="PTHR10871">
    <property type="entry name" value="30S RIBOSOMAL PROTEIN S13/40S RIBOSOMAL PROTEIN S18"/>
    <property type="match status" value="1"/>
</dbReference>
<dbReference type="PANTHER" id="PTHR10871:SF1">
    <property type="entry name" value="SMALL RIBOSOMAL SUBUNIT PROTEIN US13M"/>
    <property type="match status" value="1"/>
</dbReference>
<dbReference type="Pfam" id="PF00416">
    <property type="entry name" value="Ribosomal_S13"/>
    <property type="match status" value="1"/>
</dbReference>
<dbReference type="PIRSF" id="PIRSF002134">
    <property type="entry name" value="Ribosomal_S13"/>
    <property type="match status" value="1"/>
</dbReference>
<dbReference type="SUPFAM" id="SSF46946">
    <property type="entry name" value="S13-like H2TH domain"/>
    <property type="match status" value="1"/>
</dbReference>
<dbReference type="PROSITE" id="PS00646">
    <property type="entry name" value="RIBOSOMAL_S13_1"/>
    <property type="match status" value="1"/>
</dbReference>
<dbReference type="PROSITE" id="PS50159">
    <property type="entry name" value="RIBOSOMAL_S13_2"/>
    <property type="match status" value="1"/>
</dbReference>
<gene>
    <name evidence="1" type="primary">rpsM</name>
    <name type="ordered locus">NSE_0287</name>
</gene>
<sequence>MRFLGVNLPDNKAVVVALTYLYGIGLPTARKICSSLAIDGSAKLPDLEQEQLNSIMAYIKNDIPFEGELRKSVAFSIKHLVDIKCYRGVRHRKNLPVRGQRTRTNARTRKGKVRVPIAAKKRV</sequence>
<proteinExistence type="inferred from homology"/>
<comment type="function">
    <text evidence="1">Located at the top of the head of the 30S subunit, it contacts several helices of the 16S rRNA. In the 70S ribosome it contacts the 23S rRNA (bridge B1a) and protein L5 of the 50S subunit (bridge B1b), connecting the 2 subunits; these bridges are implicated in subunit movement. Contacts the tRNAs in the A and P-sites.</text>
</comment>
<comment type="subunit">
    <text evidence="1">Part of the 30S ribosomal subunit. Forms a loose heterodimer with protein S19. Forms two bridges to the 50S subunit in the 70S ribosome.</text>
</comment>
<comment type="similarity">
    <text evidence="1">Belongs to the universal ribosomal protein uS13 family.</text>
</comment>
<organism>
    <name type="scientific">Neorickettsia sennetsu (strain ATCC VR-367 / Miyayama)</name>
    <name type="common">Ehrlichia sennetsu</name>
    <dbReference type="NCBI Taxonomy" id="222891"/>
    <lineage>
        <taxon>Bacteria</taxon>
        <taxon>Pseudomonadati</taxon>
        <taxon>Pseudomonadota</taxon>
        <taxon>Alphaproteobacteria</taxon>
        <taxon>Rickettsiales</taxon>
        <taxon>Anaplasmataceae</taxon>
        <taxon>Neorickettsia</taxon>
    </lineage>
</organism>
<reference key="1">
    <citation type="journal article" date="2006" name="PLoS Genet.">
        <title>Comparative genomics of emerging human ehrlichiosis agents.</title>
        <authorList>
            <person name="Dunning Hotopp J.C."/>
            <person name="Lin M."/>
            <person name="Madupu R."/>
            <person name="Crabtree J."/>
            <person name="Angiuoli S.V."/>
            <person name="Eisen J.A."/>
            <person name="Seshadri R."/>
            <person name="Ren Q."/>
            <person name="Wu M."/>
            <person name="Utterback T.R."/>
            <person name="Smith S."/>
            <person name="Lewis M."/>
            <person name="Khouri H."/>
            <person name="Zhang C."/>
            <person name="Niu H."/>
            <person name="Lin Q."/>
            <person name="Ohashi N."/>
            <person name="Zhi N."/>
            <person name="Nelson W.C."/>
            <person name="Brinkac L.M."/>
            <person name="Dodson R.J."/>
            <person name="Rosovitz M.J."/>
            <person name="Sundaram J.P."/>
            <person name="Daugherty S.C."/>
            <person name="Davidsen T."/>
            <person name="Durkin A.S."/>
            <person name="Gwinn M.L."/>
            <person name="Haft D.H."/>
            <person name="Selengut J.D."/>
            <person name="Sullivan S.A."/>
            <person name="Zafar N."/>
            <person name="Zhou L."/>
            <person name="Benahmed F."/>
            <person name="Forberger H."/>
            <person name="Halpin R."/>
            <person name="Mulligan S."/>
            <person name="Robinson J."/>
            <person name="White O."/>
            <person name="Rikihisa Y."/>
            <person name="Tettelin H."/>
        </authorList>
    </citation>
    <scope>NUCLEOTIDE SEQUENCE [LARGE SCALE GENOMIC DNA]</scope>
    <source>
        <strain>ATCC VR-367 / Miyayama</strain>
    </source>
</reference>
<name>RS13_NEOSM</name>
<accession>Q2GEB8</accession>
<feature type="chain" id="PRO_0000306660" description="Small ribosomal subunit protein uS13">
    <location>
        <begin position="1"/>
        <end position="123"/>
    </location>
</feature>
<protein>
    <recommendedName>
        <fullName evidence="1">Small ribosomal subunit protein uS13</fullName>
    </recommendedName>
    <alternativeName>
        <fullName evidence="2">30S ribosomal protein S13</fullName>
    </alternativeName>
</protein>